<keyword id="KW-0963">Cytoplasm</keyword>
<keyword id="KW-0251">Elongation factor</keyword>
<keyword id="KW-0648">Protein biosynthesis</keyword>
<keyword id="KW-1185">Reference proteome</keyword>
<feature type="chain" id="PRO_0000161190" description="Elongation factor Ts">
    <location>
        <begin position="1"/>
        <end position="283"/>
    </location>
</feature>
<feature type="region of interest" description="Involved in Mg(2+) ion dislocation from EF-Tu" evidence="1">
    <location>
        <begin position="79"/>
        <end position="82"/>
    </location>
</feature>
<organism>
    <name type="scientific">Shewanella oneidensis (strain ATCC 700550 / JCM 31522 / CIP 106686 / LMG 19005 / NCIMB 14063 / MR-1)</name>
    <dbReference type="NCBI Taxonomy" id="211586"/>
    <lineage>
        <taxon>Bacteria</taxon>
        <taxon>Pseudomonadati</taxon>
        <taxon>Pseudomonadota</taxon>
        <taxon>Gammaproteobacteria</taxon>
        <taxon>Alteromonadales</taxon>
        <taxon>Shewanellaceae</taxon>
        <taxon>Shewanella</taxon>
    </lineage>
</organism>
<gene>
    <name evidence="1" type="primary">tsf</name>
    <name type="ordered locus">SO_1630</name>
</gene>
<dbReference type="EMBL" id="AE014299">
    <property type="protein sequence ID" value="AAN54685.1"/>
    <property type="molecule type" value="Genomic_DNA"/>
</dbReference>
<dbReference type="RefSeq" id="NP_717241.1">
    <property type="nucleotide sequence ID" value="NC_004347.2"/>
</dbReference>
<dbReference type="RefSeq" id="WP_011071785.1">
    <property type="nucleotide sequence ID" value="NC_004347.2"/>
</dbReference>
<dbReference type="SMR" id="Q8EGH4"/>
<dbReference type="STRING" id="211586.SO_1630"/>
<dbReference type="PaxDb" id="211586-SO_1630"/>
<dbReference type="KEGG" id="son:SO_1630"/>
<dbReference type="PATRIC" id="fig|211586.12.peg.1569"/>
<dbReference type="eggNOG" id="COG0264">
    <property type="taxonomic scope" value="Bacteria"/>
</dbReference>
<dbReference type="HOGENOM" id="CLU_047155_0_2_6"/>
<dbReference type="OrthoDB" id="9808348at2"/>
<dbReference type="PhylomeDB" id="Q8EGH4"/>
<dbReference type="BioCyc" id="SONE211586:G1GMP-1500-MONOMER"/>
<dbReference type="Proteomes" id="UP000008186">
    <property type="component" value="Chromosome"/>
</dbReference>
<dbReference type="GO" id="GO:0005737">
    <property type="term" value="C:cytoplasm"/>
    <property type="evidence" value="ECO:0007669"/>
    <property type="project" value="UniProtKB-SubCell"/>
</dbReference>
<dbReference type="GO" id="GO:0003746">
    <property type="term" value="F:translation elongation factor activity"/>
    <property type="evidence" value="ECO:0000318"/>
    <property type="project" value="GO_Central"/>
</dbReference>
<dbReference type="GO" id="GO:0006414">
    <property type="term" value="P:translational elongation"/>
    <property type="evidence" value="ECO:0000318"/>
    <property type="project" value="GO_Central"/>
</dbReference>
<dbReference type="CDD" id="cd14275">
    <property type="entry name" value="UBA_EF-Ts"/>
    <property type="match status" value="1"/>
</dbReference>
<dbReference type="FunFam" id="1.10.286.20:FF:000001">
    <property type="entry name" value="Elongation factor Ts"/>
    <property type="match status" value="1"/>
</dbReference>
<dbReference type="FunFam" id="1.10.8.10:FF:000001">
    <property type="entry name" value="Elongation factor Ts"/>
    <property type="match status" value="1"/>
</dbReference>
<dbReference type="FunFam" id="3.30.479.20:FF:000001">
    <property type="entry name" value="Elongation factor Ts"/>
    <property type="match status" value="1"/>
</dbReference>
<dbReference type="Gene3D" id="1.10.286.20">
    <property type="match status" value="1"/>
</dbReference>
<dbReference type="Gene3D" id="1.10.8.10">
    <property type="entry name" value="DNA helicase RuvA subunit, C-terminal domain"/>
    <property type="match status" value="1"/>
</dbReference>
<dbReference type="Gene3D" id="3.30.479.20">
    <property type="entry name" value="Elongation factor Ts, dimerisation domain"/>
    <property type="match status" value="2"/>
</dbReference>
<dbReference type="HAMAP" id="MF_00050">
    <property type="entry name" value="EF_Ts"/>
    <property type="match status" value="1"/>
</dbReference>
<dbReference type="InterPro" id="IPR036402">
    <property type="entry name" value="EF-Ts_dimer_sf"/>
</dbReference>
<dbReference type="InterPro" id="IPR001816">
    <property type="entry name" value="Transl_elong_EFTs/EF1B"/>
</dbReference>
<dbReference type="InterPro" id="IPR014039">
    <property type="entry name" value="Transl_elong_EFTs/EF1B_dimer"/>
</dbReference>
<dbReference type="InterPro" id="IPR018101">
    <property type="entry name" value="Transl_elong_Ts_CS"/>
</dbReference>
<dbReference type="InterPro" id="IPR009060">
    <property type="entry name" value="UBA-like_sf"/>
</dbReference>
<dbReference type="NCBIfam" id="TIGR00116">
    <property type="entry name" value="tsf"/>
    <property type="match status" value="1"/>
</dbReference>
<dbReference type="PANTHER" id="PTHR11741">
    <property type="entry name" value="ELONGATION FACTOR TS"/>
    <property type="match status" value="1"/>
</dbReference>
<dbReference type="PANTHER" id="PTHR11741:SF0">
    <property type="entry name" value="ELONGATION FACTOR TS, MITOCHONDRIAL"/>
    <property type="match status" value="1"/>
</dbReference>
<dbReference type="Pfam" id="PF00889">
    <property type="entry name" value="EF_TS"/>
    <property type="match status" value="1"/>
</dbReference>
<dbReference type="SUPFAM" id="SSF54713">
    <property type="entry name" value="Elongation factor Ts (EF-Ts), dimerisation domain"/>
    <property type="match status" value="2"/>
</dbReference>
<dbReference type="SUPFAM" id="SSF46934">
    <property type="entry name" value="UBA-like"/>
    <property type="match status" value="1"/>
</dbReference>
<dbReference type="PROSITE" id="PS01126">
    <property type="entry name" value="EF_TS_1"/>
    <property type="match status" value="1"/>
</dbReference>
<dbReference type="PROSITE" id="PS01127">
    <property type="entry name" value="EF_TS_2"/>
    <property type="match status" value="1"/>
</dbReference>
<name>EFTS_SHEON</name>
<evidence type="ECO:0000255" key="1">
    <source>
        <dbReference type="HAMAP-Rule" id="MF_00050"/>
    </source>
</evidence>
<sequence>MAISAAQVKELRERTGAGMMDCKKALEETNGDMELAIDNMRKSGAAKAAKKAGNIAADGTILIKNGEGFAVLLEVNCQTDFVAKDANFLGFANAVLDVAAASKVTLEDLKAQFEEARVALVAKIGENINVRRVEYIDGAKLASYRHGERIGVVVTGDADEETLKHLAMHVAASKPEYVNPEDVPADVVAREQALQIEISMNEGKPADIAEKMVVGRMKKFTGEISLTGQAYIMEPKKTVGEFLKEKGAKVTNFIRLEVGEGIEKKEEDFAAEVAAQIAASKKA</sequence>
<reference key="1">
    <citation type="journal article" date="2002" name="Nat. Biotechnol.">
        <title>Genome sequence of the dissimilatory metal ion-reducing bacterium Shewanella oneidensis.</title>
        <authorList>
            <person name="Heidelberg J.F."/>
            <person name="Paulsen I.T."/>
            <person name="Nelson K.E."/>
            <person name="Gaidos E.J."/>
            <person name="Nelson W.C."/>
            <person name="Read T.D."/>
            <person name="Eisen J.A."/>
            <person name="Seshadri R."/>
            <person name="Ward N.L."/>
            <person name="Methe B.A."/>
            <person name="Clayton R.A."/>
            <person name="Meyer T."/>
            <person name="Tsapin A."/>
            <person name="Scott J."/>
            <person name="Beanan M.J."/>
            <person name="Brinkac L.M."/>
            <person name="Daugherty S.C."/>
            <person name="DeBoy R.T."/>
            <person name="Dodson R.J."/>
            <person name="Durkin A.S."/>
            <person name="Haft D.H."/>
            <person name="Kolonay J.F."/>
            <person name="Madupu R."/>
            <person name="Peterson J.D."/>
            <person name="Umayam L.A."/>
            <person name="White O."/>
            <person name="Wolf A.M."/>
            <person name="Vamathevan J.J."/>
            <person name="Weidman J.F."/>
            <person name="Impraim M."/>
            <person name="Lee K."/>
            <person name="Berry K.J."/>
            <person name="Lee C."/>
            <person name="Mueller J."/>
            <person name="Khouri H.M."/>
            <person name="Gill J."/>
            <person name="Utterback T.R."/>
            <person name="McDonald L.A."/>
            <person name="Feldblyum T.V."/>
            <person name="Smith H.O."/>
            <person name="Venter J.C."/>
            <person name="Nealson K.H."/>
            <person name="Fraser C.M."/>
        </authorList>
    </citation>
    <scope>NUCLEOTIDE SEQUENCE [LARGE SCALE GENOMIC DNA]</scope>
    <source>
        <strain>ATCC 700550 / JCM 31522 / CIP 106686 / LMG 19005 / NCIMB 14063 / MR-1</strain>
    </source>
</reference>
<comment type="function">
    <text evidence="1">Associates with the EF-Tu.GDP complex and induces the exchange of GDP to GTP. It remains bound to the aminoacyl-tRNA.EF-Tu.GTP complex up to the GTP hydrolysis stage on the ribosome.</text>
</comment>
<comment type="subcellular location">
    <subcellularLocation>
        <location evidence="1">Cytoplasm</location>
    </subcellularLocation>
</comment>
<comment type="similarity">
    <text evidence="1">Belongs to the EF-Ts family.</text>
</comment>
<protein>
    <recommendedName>
        <fullName evidence="1">Elongation factor Ts</fullName>
        <shortName evidence="1">EF-Ts</shortName>
    </recommendedName>
</protein>
<proteinExistence type="inferred from homology"/>
<accession>Q8EGH4</accession>